<dbReference type="EC" id="6.3.2.-" evidence="8"/>
<dbReference type="EMBL" id="KV878250">
    <property type="protein sequence ID" value="OJZ81665.1"/>
    <property type="molecule type" value="Genomic_DNA"/>
</dbReference>
<dbReference type="SMR" id="A0A1M3T4K3"/>
<dbReference type="VEuPathDB" id="FungiDB:ASPFODRAFT_65064"/>
<dbReference type="OrthoDB" id="45369at5052"/>
<dbReference type="Proteomes" id="UP000184063">
    <property type="component" value="Unassembled WGS sequence"/>
</dbReference>
<dbReference type="GO" id="GO:0005737">
    <property type="term" value="C:cytoplasm"/>
    <property type="evidence" value="ECO:0007669"/>
    <property type="project" value="TreeGrafter"/>
</dbReference>
<dbReference type="GO" id="GO:0016874">
    <property type="term" value="F:ligase activity"/>
    <property type="evidence" value="ECO:0007669"/>
    <property type="project" value="UniProtKB-KW"/>
</dbReference>
<dbReference type="GO" id="GO:0031177">
    <property type="term" value="F:phosphopantetheine binding"/>
    <property type="evidence" value="ECO:0007669"/>
    <property type="project" value="InterPro"/>
</dbReference>
<dbReference type="GO" id="GO:0043041">
    <property type="term" value="P:amino acid activation for nonribosomal peptide biosynthetic process"/>
    <property type="evidence" value="ECO:0007669"/>
    <property type="project" value="TreeGrafter"/>
</dbReference>
<dbReference type="GO" id="GO:0044550">
    <property type="term" value="P:secondary metabolite biosynthetic process"/>
    <property type="evidence" value="ECO:0007669"/>
    <property type="project" value="TreeGrafter"/>
</dbReference>
<dbReference type="CDD" id="cd05918">
    <property type="entry name" value="A_NRPS_SidN3_like"/>
    <property type="match status" value="4"/>
</dbReference>
<dbReference type="CDD" id="cd19542">
    <property type="entry name" value="CT_NRPS-like"/>
    <property type="match status" value="2"/>
</dbReference>
<dbReference type="CDD" id="cd19534">
    <property type="entry name" value="E_NRPS"/>
    <property type="match status" value="1"/>
</dbReference>
<dbReference type="CDD" id="cd19545">
    <property type="entry name" value="FUM14_C_NRPS-like"/>
    <property type="match status" value="1"/>
</dbReference>
<dbReference type="FunFam" id="3.30.559.10:FF:000016">
    <property type="entry name" value="Nonribosomal peptide synthase Pes1"/>
    <property type="match status" value="1"/>
</dbReference>
<dbReference type="FunFam" id="3.30.559.30:FF:000002">
    <property type="entry name" value="Nonribosomal peptide synthase Pes1"/>
    <property type="match status" value="1"/>
</dbReference>
<dbReference type="FunFam" id="3.30.300.30:FF:000015">
    <property type="entry name" value="Nonribosomal peptide synthase SidD"/>
    <property type="match status" value="4"/>
</dbReference>
<dbReference type="FunFam" id="3.30.559.30:FF:000003">
    <property type="entry name" value="Nonribosomal peptide synthase SidD"/>
    <property type="match status" value="1"/>
</dbReference>
<dbReference type="Gene3D" id="3.30.300.30">
    <property type="match status" value="4"/>
</dbReference>
<dbReference type="Gene3D" id="1.10.1200.10">
    <property type="entry name" value="ACP-like"/>
    <property type="match status" value="4"/>
</dbReference>
<dbReference type="Gene3D" id="3.30.559.10">
    <property type="entry name" value="Chloramphenicol acetyltransferase-like domain"/>
    <property type="match status" value="5"/>
</dbReference>
<dbReference type="Gene3D" id="3.40.50.12780">
    <property type="entry name" value="N-terminal domain of ligase-like"/>
    <property type="match status" value="4"/>
</dbReference>
<dbReference type="Gene3D" id="3.30.559.30">
    <property type="entry name" value="Nonribosomal peptide synthetase, condensation domain"/>
    <property type="match status" value="6"/>
</dbReference>
<dbReference type="InterPro" id="IPR010071">
    <property type="entry name" value="AA_adenyl_dom"/>
</dbReference>
<dbReference type="InterPro" id="IPR036736">
    <property type="entry name" value="ACP-like_sf"/>
</dbReference>
<dbReference type="InterPro" id="IPR045851">
    <property type="entry name" value="AMP-bd_C_sf"/>
</dbReference>
<dbReference type="InterPro" id="IPR020845">
    <property type="entry name" value="AMP-binding_CS"/>
</dbReference>
<dbReference type="InterPro" id="IPR000873">
    <property type="entry name" value="AMP-dep_synth/lig_dom"/>
</dbReference>
<dbReference type="InterPro" id="IPR042099">
    <property type="entry name" value="ANL_N_sf"/>
</dbReference>
<dbReference type="InterPro" id="IPR023213">
    <property type="entry name" value="CAT-like_dom_sf"/>
</dbReference>
<dbReference type="InterPro" id="IPR001242">
    <property type="entry name" value="Condensatn"/>
</dbReference>
<dbReference type="InterPro" id="IPR020806">
    <property type="entry name" value="PKS_PP-bd"/>
</dbReference>
<dbReference type="InterPro" id="IPR009081">
    <property type="entry name" value="PP-bd_ACP"/>
</dbReference>
<dbReference type="InterPro" id="IPR006162">
    <property type="entry name" value="Ppantetheine_attach_site"/>
</dbReference>
<dbReference type="NCBIfam" id="TIGR01733">
    <property type="entry name" value="AA-adenyl-dom"/>
    <property type="match status" value="4"/>
</dbReference>
<dbReference type="NCBIfam" id="NF003417">
    <property type="entry name" value="PRK04813.1"/>
    <property type="match status" value="4"/>
</dbReference>
<dbReference type="PANTHER" id="PTHR45527">
    <property type="entry name" value="NONRIBOSOMAL PEPTIDE SYNTHETASE"/>
    <property type="match status" value="1"/>
</dbReference>
<dbReference type="PANTHER" id="PTHR45527:SF12">
    <property type="entry name" value="NONRIBOSOMAL PEPTIDE SYNTHETASE IVOA"/>
    <property type="match status" value="1"/>
</dbReference>
<dbReference type="Pfam" id="PF00501">
    <property type="entry name" value="AMP-binding"/>
    <property type="match status" value="4"/>
</dbReference>
<dbReference type="Pfam" id="PF00668">
    <property type="entry name" value="Condensation"/>
    <property type="match status" value="5"/>
</dbReference>
<dbReference type="Pfam" id="PF00550">
    <property type="entry name" value="PP-binding"/>
    <property type="match status" value="4"/>
</dbReference>
<dbReference type="SMART" id="SM00823">
    <property type="entry name" value="PKS_PP"/>
    <property type="match status" value="3"/>
</dbReference>
<dbReference type="SMART" id="SM01294">
    <property type="entry name" value="PKS_PP_betabranch"/>
    <property type="match status" value="1"/>
</dbReference>
<dbReference type="SUPFAM" id="SSF56801">
    <property type="entry name" value="Acetyl-CoA synthetase-like"/>
    <property type="match status" value="4"/>
</dbReference>
<dbReference type="SUPFAM" id="SSF47336">
    <property type="entry name" value="ACP-like"/>
    <property type="match status" value="4"/>
</dbReference>
<dbReference type="SUPFAM" id="SSF52777">
    <property type="entry name" value="CoA-dependent acyltransferases"/>
    <property type="match status" value="11"/>
</dbReference>
<dbReference type="PROSITE" id="PS00455">
    <property type="entry name" value="AMP_BINDING"/>
    <property type="match status" value="3"/>
</dbReference>
<dbReference type="PROSITE" id="PS50075">
    <property type="entry name" value="CARRIER"/>
    <property type="match status" value="4"/>
</dbReference>
<dbReference type="PROSITE" id="PS00012">
    <property type="entry name" value="PHOSPHOPANTETHEINE"/>
    <property type="match status" value="1"/>
</dbReference>
<reference key="1">
    <citation type="journal article" date="2017" name="Genome Biol.">
        <title>Comparative genomics reveals high biological diversity and specific adaptations in the industrially and medically important fungal genus Aspergillus.</title>
        <authorList>
            <person name="de Vries R.P."/>
            <person name="Riley R."/>
            <person name="Wiebenga A."/>
            <person name="Aguilar-Osorio G."/>
            <person name="Amillis S."/>
            <person name="Uchima C.A."/>
            <person name="Anderluh G."/>
            <person name="Asadollahi M."/>
            <person name="Askin M."/>
            <person name="Barry K."/>
            <person name="Battaglia E."/>
            <person name="Bayram O."/>
            <person name="Benocci T."/>
            <person name="Braus-Stromeyer S.A."/>
            <person name="Caldana C."/>
            <person name="Canovas D."/>
            <person name="Cerqueira G.C."/>
            <person name="Chen F."/>
            <person name="Chen W."/>
            <person name="Choi C."/>
            <person name="Clum A."/>
            <person name="Dos Santos R.A."/>
            <person name="Damasio A.R."/>
            <person name="Diallinas G."/>
            <person name="Emri T."/>
            <person name="Fekete E."/>
            <person name="Flipphi M."/>
            <person name="Freyberg S."/>
            <person name="Gallo A."/>
            <person name="Gournas C."/>
            <person name="Habgood R."/>
            <person name="Hainaut M."/>
            <person name="Harispe M.L."/>
            <person name="Henrissat B."/>
            <person name="Hilden K.S."/>
            <person name="Hope R."/>
            <person name="Hossain A."/>
            <person name="Karabika E."/>
            <person name="Karaffa L."/>
            <person name="Karanyi Z."/>
            <person name="Krasevec N."/>
            <person name="Kuo A."/>
            <person name="Kusch H."/>
            <person name="LaButti K."/>
            <person name="Lagendijk E.L."/>
            <person name="Lapidus A."/>
            <person name="Levasseur A."/>
            <person name="Lindquist E."/>
            <person name="Lipzen A."/>
            <person name="Logrieco A.F."/>
            <person name="MacCabe A."/>
            <person name="Maekelae M.R."/>
            <person name="Malavazi I."/>
            <person name="Melin P."/>
            <person name="Meyer V."/>
            <person name="Mielnichuk N."/>
            <person name="Miskei M."/>
            <person name="Molnar A.P."/>
            <person name="Mule G."/>
            <person name="Ngan C.Y."/>
            <person name="Orejas M."/>
            <person name="Orosz E."/>
            <person name="Ouedraogo J.P."/>
            <person name="Overkamp K.M."/>
            <person name="Park H.-S."/>
            <person name="Perrone G."/>
            <person name="Piumi F."/>
            <person name="Punt P.J."/>
            <person name="Ram A.F."/>
            <person name="Ramon A."/>
            <person name="Rauscher S."/>
            <person name="Record E."/>
            <person name="Riano-Pachon D.M."/>
            <person name="Robert V."/>
            <person name="Roehrig J."/>
            <person name="Ruller R."/>
            <person name="Salamov A."/>
            <person name="Salih N.S."/>
            <person name="Samson R.A."/>
            <person name="Sandor E."/>
            <person name="Sanguinetti M."/>
            <person name="Schuetze T."/>
            <person name="Sepcic K."/>
            <person name="Shelest E."/>
            <person name="Sherlock G."/>
            <person name="Sophianopoulou V."/>
            <person name="Squina F.M."/>
            <person name="Sun H."/>
            <person name="Susca A."/>
            <person name="Todd R.B."/>
            <person name="Tsang A."/>
            <person name="Unkles S.E."/>
            <person name="van de Wiele N."/>
            <person name="van Rossen-Uffink D."/>
            <person name="Oliveira J.V."/>
            <person name="Vesth T.C."/>
            <person name="Visser J."/>
            <person name="Yu J.-H."/>
            <person name="Zhou M."/>
            <person name="Andersen M.R."/>
            <person name="Archer D.B."/>
            <person name="Baker S.E."/>
            <person name="Benoit I."/>
            <person name="Brakhage A.A."/>
            <person name="Braus G.H."/>
            <person name="Fischer R."/>
            <person name="Frisvad J.C."/>
            <person name="Goldman G.H."/>
            <person name="Houbraken J."/>
            <person name="Oakley B."/>
            <person name="Pocsi I."/>
            <person name="Scazzocchio C."/>
            <person name="Seiboth B."/>
            <person name="vanKuyk P.A."/>
            <person name="Wortman J."/>
            <person name="Dyer P.S."/>
            <person name="Grigoriev I.V."/>
        </authorList>
    </citation>
    <scope>NUCLEOTIDE SEQUENCE [LARGE SCALE GENOMIC DNA]</scope>
    <source>
        <strain>CBS 106.47</strain>
    </source>
</reference>
<reference key="2">
    <citation type="journal article" date="2009" name="J. Antibiot.">
        <title>Solid-phase synthesis and biological activity of malformin C and its derivatives.</title>
        <authorList>
            <person name="Kojima Y."/>
            <person name="Sunazuka T."/>
            <person name="Nagai K."/>
            <person name="Hirose T."/>
            <person name="Namatame M."/>
            <person name="Ishiyama A."/>
            <person name="Otoguro K."/>
            <person name="Omura S."/>
        </authorList>
    </citation>
    <scope>BIOTECHNOLOGY</scope>
</reference>
<reference key="3">
    <citation type="journal article" date="2015" name="PLoS ONE">
        <title>Study of malformin C, a fungal source cyclic pentapeptide, as an anti-cancer drug.</title>
        <authorList>
            <person name="Wang J."/>
            <person name="Jiang Z."/>
            <person name="Lam W."/>
            <person name="Gullen E.A."/>
            <person name="Yu Z."/>
            <person name="Wei Y."/>
            <person name="Wang L."/>
            <person name="Zeiss C."/>
            <person name="Beck A."/>
            <person name="Cheng E.C."/>
            <person name="Wu C."/>
            <person name="Cheng Y.C."/>
            <person name="Zhang Y."/>
        </authorList>
    </citation>
    <scope>BIOTECHNOLOGY</scope>
</reference>
<reference key="4">
    <citation type="journal article" date="2016" name="Cancer Chemother. Pharmacol.">
        <title>Malformin A1 promotes cell death through induction of apoptosis, necrosis and autophagy in prostate cancer cells.</title>
        <authorList>
            <person name="Liu Y."/>
            <person name="Wang M."/>
            <person name="Wang D."/>
            <person name="Li X."/>
            <person name="Wang W."/>
            <person name="Lou H."/>
            <person name="Yuan H."/>
        </authorList>
    </citation>
    <scope>BIOTECHNOLOGY</scope>
</reference>
<reference key="5">
    <citation type="journal article" date="2017" name="Int. J. Oncol.">
        <title>Malformin A1 treatment alters invasive and oncogenic phenotypes of human colorectal cancer cells through stimulation of the p38 signaling pathway.</title>
        <authorList>
            <person name="Park S.Y."/>
            <person name="Oh H.H."/>
            <person name="Park Y.L."/>
            <person name="Yu H.M."/>
            <person name="Myung D.S."/>
            <person name="Cho S.B."/>
            <person name="Lee W.S."/>
            <person name="Park D."/>
            <person name="Joo Y.E."/>
        </authorList>
    </citation>
    <scope>BIOTECHNOLOGY</scope>
</reference>
<reference key="6">
    <citation type="journal article" date="2018" name="Sci. Rep.">
        <title>Uncovering secondary metabolite evolution and biosynthesis using gene cluster networks and genetic dereplication.</title>
        <authorList>
            <person name="Theobald S."/>
            <person name="Vesth T.C."/>
            <person name="Rendsvig J.K."/>
            <person name="Nielsen K.F."/>
            <person name="Riley R."/>
            <person name="de Abreu L.M."/>
            <person name="Salamov A."/>
            <person name="Frisvad J.C."/>
            <person name="Larsen T.O."/>
            <person name="Andersen M.R."/>
            <person name="Hoof J.B."/>
        </authorList>
    </citation>
    <scope>IDENTIFICATION</scope>
    <scope>FUNCTION</scope>
    <scope>PATHWAY</scope>
</reference>
<proteinExistence type="evidence at protein level"/>
<keyword id="KW-0436">Ligase</keyword>
<keyword id="KW-0596">Phosphopantetheine</keyword>
<keyword id="KW-0597">Phosphoprotein</keyword>
<keyword id="KW-1185">Reference proteome</keyword>
<keyword id="KW-0677">Repeat</keyword>
<feature type="chain" id="PRO_0000446434" description="Malformin synthetase mlfA">
    <location>
        <begin position="1"/>
        <end position="5082"/>
    </location>
</feature>
<feature type="domain" description="Carrier 1" evidence="2">
    <location>
        <begin position="749"/>
        <end position="822"/>
    </location>
</feature>
<feature type="domain" description="Carrier 2" evidence="2">
    <location>
        <begin position="1846"/>
        <end position="1923"/>
    </location>
</feature>
<feature type="domain" description="Carrier 3" evidence="2">
    <location>
        <begin position="3024"/>
        <end position="3100"/>
    </location>
</feature>
<feature type="domain" description="Carrier 4" evidence="2">
    <location>
        <begin position="4560"/>
        <end position="4636"/>
    </location>
</feature>
<feature type="region of interest" description="Adenylation 1" evidence="1">
    <location>
        <begin position="225"/>
        <end position="616"/>
    </location>
</feature>
<feature type="region of interest" description="Condensation 1" evidence="1">
    <location>
        <begin position="860"/>
        <end position="1291"/>
    </location>
</feature>
<feature type="region of interest" description="Adenylation 2" evidence="1">
    <location>
        <begin position="1319"/>
        <end position="1708"/>
    </location>
</feature>
<feature type="region of interest" description="Disordered" evidence="3">
    <location>
        <begin position="1924"/>
        <end position="1953"/>
    </location>
</feature>
<feature type="region of interest" description="Disordered" evidence="3">
    <location>
        <begin position="1986"/>
        <end position="2012"/>
    </location>
</feature>
<feature type="region of interest" description="Condensation 2" evidence="1">
    <location>
        <begin position="2058"/>
        <end position="2473"/>
    </location>
</feature>
<feature type="region of interest" description="Adenylation 3" evidence="1">
    <location>
        <begin position="2496"/>
        <end position="2888"/>
    </location>
</feature>
<feature type="region of interest" description="Condensation 3" evidence="1">
    <location>
        <begin position="3117"/>
        <end position="3582"/>
    </location>
</feature>
<feature type="region of interest" description="Condensation 4" evidence="1">
    <location>
        <begin position="3603"/>
        <end position="4022"/>
    </location>
</feature>
<feature type="region of interest" description="Adenylation 4" evidence="1">
    <location>
        <begin position="4047"/>
        <end position="4426"/>
    </location>
</feature>
<feature type="region of interest" description="Condensation 5" evidence="1">
    <location>
        <begin position="4673"/>
        <end position="5000"/>
    </location>
</feature>
<feature type="compositionally biased region" description="Low complexity" evidence="3">
    <location>
        <begin position="1926"/>
        <end position="1950"/>
    </location>
</feature>
<feature type="compositionally biased region" description="Low complexity" evidence="3">
    <location>
        <begin position="1988"/>
        <end position="2005"/>
    </location>
</feature>
<feature type="modified residue" description="O-(pantetheine 4'-phosphoryl)serine" evidence="2">
    <location>
        <position position="783"/>
    </location>
</feature>
<feature type="modified residue" description="O-(pantetheine 4'-phosphoryl)serine" evidence="2">
    <location>
        <position position="1883"/>
    </location>
</feature>
<feature type="modified residue" description="O-(pantetheine 4'-phosphoryl)serine" evidence="2">
    <location>
        <position position="3061"/>
    </location>
</feature>
<feature type="modified residue" description="O-(pantetheine 4'-phosphoryl)serine" evidence="2">
    <location>
        <position position="4597"/>
    </location>
</feature>
<organism>
    <name type="scientific">Aspergillus luchuensis (strain CBS 106.47)</name>
    <dbReference type="NCBI Taxonomy" id="1137211"/>
    <lineage>
        <taxon>Eukaryota</taxon>
        <taxon>Fungi</taxon>
        <taxon>Dikarya</taxon>
        <taxon>Ascomycota</taxon>
        <taxon>Pezizomycotina</taxon>
        <taxon>Eurotiomycetes</taxon>
        <taxon>Eurotiomycetidae</taxon>
        <taxon>Eurotiales</taxon>
        <taxon>Aspergillaceae</taxon>
        <taxon>Aspergillus</taxon>
        <taxon>Aspergillus subgen. Circumdati</taxon>
    </lineage>
</organism>
<evidence type="ECO:0000255" key="1"/>
<evidence type="ECO:0000255" key="2">
    <source>
        <dbReference type="PROSITE-ProRule" id="PRU00258"/>
    </source>
</evidence>
<evidence type="ECO:0000256" key="3">
    <source>
        <dbReference type="SAM" id="MobiDB-lite"/>
    </source>
</evidence>
<evidence type="ECO:0000269" key="4">
    <source>
    </source>
</evidence>
<evidence type="ECO:0000269" key="5">
    <source>
    </source>
</evidence>
<evidence type="ECO:0000269" key="6">
    <source>
    </source>
</evidence>
<evidence type="ECO:0000269" key="7">
    <source>
    </source>
</evidence>
<evidence type="ECO:0000269" key="8">
    <source>
    </source>
</evidence>
<evidence type="ECO:0000303" key="9">
    <source>
    </source>
</evidence>
<evidence type="ECO:0000305" key="10"/>
<evidence type="ECO:0000305" key="11">
    <source>
    </source>
</evidence>
<accession>A0A1M3T4K3</accession>
<sequence>MSRFSCIFPTLTDGYVPNPDHTRAAGRRTYRIDLSGWKAPGSETESLILAAWGLVLSSYVGTDEVAFYVVPTTGPDTTALAELKVEGDMPRQSLTYAAHQLLHPGLVGAGQVSGETANTIITFANDIESLFVTQTEESFLSLHVYRDEQGHISLSLTYYLSLLTDAQAANVGTAMAQALAEVGTCDNDKLVKDLSLMSPAHLEHIWRFNADVPGIWEECFHDVIERHAANRPHSLAVDAWDTKLTYTDLVREARLLAAYLQRRGVGPGSVVPISFERSGAALVAMLAVSKAGGAFVSVPPNLPAGRVDAILEVIEAPFVVTWTKYESFWAERLPTLPIDNYPKPAADATVEALGKPEDLFYVIFTSGSTGRPKGCMLSHTNWLNGALRNAPSWKYGPESRVLQMLSHTFDMSLLEICTSLGSGSCVCVPRPEEIETSISDAINRWQVNHVIMTPSLARALRPDDVPGLKTMCLGGEAFPKEIVTMWSERINLWQFYGPSECSINSSSWPITRPDADPLNIGPPNSAACWVVDVHDYNKLVPVGAIGELLVSGPIVGMGYLKNPVKTAEAFLEEVGFVAKDDPQFGGFRFYRTGDLVRWNSDGTITFCGRADTQVKLNGQRLELAEVEYQLGLEAGVQYAIAMAPQAGLCKNNLIAILTVKGTSTGTQDTAADEIPLLDRRDPIVQETVKKLRSQLQHALPRYMVPTIWAFVGRMPMSASGKIDRRMSQETFDAITGRSLEAEEHAFGLSRLEQKIQLAWAEALGLSAAEVGLQQPFVALGGDSIKALDAVARCRARQIKISMVHILSCEGVREAASLAEVQETPAQQVAEMAVDYSNLWTRLSNDYDLDKLGVTQVEEVENVFPCTTMQEGMFLGQIRRPGAYHMRFFHRVQLKGGCLPTVERIQQAWASLVERHPSLRTVFVDDLSPEAIYHSIVLRSVPMEVRMREVPRDLSAEAALAIFTEELVPFRANAPLHRMLLLTCRGRVPYLMLEISHVIMDGYALSVFRREFIRACSSSAPLPRGPDYRMFANYHRTRQTDDSARYWTDYLADCVPCHIPTHAVSAPSDGPPEWPRTLQRRDFGFENSAAFLQRCKERQVTLACAIRAAWALVLRAYTQSEDVCFGYVSSGRNVPVPEVETIFGLCLSMQVCRARLSEASTIASLARKIQEDYVASLPFQHYPLAEAQRGLKQTHGQGLFNTAISMEWVPPSAEDEDALLDLEEIREQDDPTEYDIAISVDVHEGHIKLGFLYWPDLTDFEINHLAEALHGAMNCFASHPDEALNTLSLLQASDVCSALSDGPTLLPLEAVRGNVVSMIDRWVTRQPEGAAIDGWDGSMSYKELHEQSSWVARNLLHQGVRLGDRVLVCADRSSRTVATILGIVRAGCVLVLSNPTDPEKRLQWLAKKCNASLVVADPTYEERLATADAHVLSTTSVCAPAAWDYEFPALDEHDLISILFTSGSTGTPKGILMEHGALATSVFLGHGRTLRFSRHTRMLHFASLTFDAALAEIFTTLAHGGCICVPCEEDRLSDVPGCISRFAVNTAMLTPSVGRLLDPGALPTLQTLIMVGEPMSRLDVERFAPVLDLYNGAGPTETSIMVTIAGPMKPTDEPVNLGYAVAGVRLWVTEAENPNRLAPLGAVGELIVEGRLVTSGYLDDQARTQEAFLPTLPWLPSQHALYRTGDLVRYVDDGSLRYMGRKDTQVKLRGQRIELQEVEYHLRKSLQQAQIVVEMVVPAGKMRAQASLVAFVSGLTAADVESSSACNLEGTIPISQIVLPKSAFQALEEVLPRHMIPSVYYALDTIPLSVNGKADRRRLREMGSLLLASSAAHKNNIEGMSKSVKWTPTLELERTLLGLWAATLGLEAETIHGDDSFFELGGDSVSAMKLVATARDKYKLSLSVPQMFRYPTVCQLAAEVGEPAGQSASSASSTTEEGFTFSTPDDSSTNDGVDDDFLQLATAQLAQLAQEKGKKVDIAALLKQLQGGSSSNKTPSVSSSSSSSSSSKRKKNAAKAESLAEAAAPIPVQFSLLDGGADALDKVRAQAVEHCKITHEDIEDIYPATALQEGMMALTARTPGVYTTTLTGDLSEQVDIARLQYAWGKAAEAHPILRTRIILTDNNTAVQVVQRAKGLPWDTYSLREDNVLPDLTSNMTSGSPLLRLAVVHRQSQPRMLLVAIHHALYDGWSMPLLKQAVEDAYHGRDLRPQPFTPFIKHLIAGKPAAQDFWTTHLDNFVGGVFPKLPSIYHQIQPTERRTRSMTLPTAAPKAQYTMATKIQAAWAVTVSRYVEANDIVFGTVSTGRSAPVPAIDRMVGPTVTTVPVRISLGGQADRVLSLLQRVQEDSWNKLDHEHLGLQHIRRLGESAAAACNFQTLLVIQPREQPDTKYRSTLLSGLQDVAELEGVDTYPLMLVCEPDGASLNLTAVFDRAVLDGATLDRMLAHWELVLTQMWNEPNMAVIDIDAVSCSDKETLMRWNTGETITEGCAHNAVCEWSRRTPHAPAVCAWDGEWTYKELERYSSLIASQISAHGLSSGDFVALYHEKSRWTAAGILAVFKAGAILITLDPAHPTDRIKDILDQARPRLILTSQSLLDVARNLDTPVLSVQFAASQPLPEEWSSLPTICPTLAAYAPFTSGSTGRPKGIPLDHRGLAASTASIARSCLLRPASRVLHFASFAFDASMMEHLIAWHAGGCLCIPDETARQTDLAKCIRDFNVTWAFLTPSCLRLITPDDVPSLQALGLGGESMTSEDITIWSPRLRQIVQLYGPAECCIVAALTEVTKPSENRLIGRPNACRCWVVDPQNPDRLAPIGAVGELLIEGITVGRGYINDPDRTTPAFIRPPKWLQTLYPDDQEPKRLYRTGDLVRYAGVDGKLAFIGRRDGQLKLHGQRIELADVEAHLRSLIPGMQKMVVEMVHSADNQNPFLAAFLEEISTSQKPKEREIGLLHPSQSQCALDVKAIDSALSRTVPQYMIPSMYLHISRLPLSASGKLDRRHLREMVAELPRQSLNEYAAGSGLGVPDRPVTSQEHEMQAIWARVLSLDPNTFGVNDDFFRIGGDSISGMQVSTKCNAAGIHITSADLFRHRTIEQLICHLNTIRTTDSASVLLPTEPVNEWVALAPIQHLFFEVAPEGPNHFNQSLLLRTSRRVSVEELAGGLDVLIGRHSMLRARFCRKDSGQWFQQVKSLDSEPASAFYRLAAHNHITRESLRTLFTAAQMALSIEDGPLLTVDLVELEDGSQLVYLAAHHLIIDLVSWRILHGDLEEYLQTGSLSSATGSVPFLTWTQLQAEYSAEHLTPARALPGFQEANDDFDFMRYWGISSESNTFGQTSTSRFALDRTVTDILFGSANKVMDTRPVEILEAALWYSCNQALPDHPGPSIYVEGHGREPWTDSIDVSGTVGWFTIMSPLVSTPWHHLSRKSMRDFVDVLSYIKDQRRRIPANGWAYFTSRYLNDEGRVAYGRTKPVMEVLFNYMGQYQEMKREDAILQLAGDDIQSGTGASDIAGNVPRFSLIDVTAFTANGCLTFEFTFPQLIQQDARLEQCIKECEHTLVAAASSLSAEGPRKTLTDFPLMSALTYDQLSQCLNHTLPSMGLRAQDVWNIYPCSPVQRGMLLAQLRDRQAYQQRFKFQVMSRGPTEQLSLEKVKDAWTEVINRHDILRTLLLPVSDHSHFDQVVMVPGSLQHLVRGDAMDANPTEGLPHTINITSDSTGAIICEWNVSHALVDAMSIAFIQREVNQALEGSLGQHQNLPQYVEYIKWLTLQDNTEAQAYWQNHLNGVEPCLFPKLTSSPDKVNPEATISAIRATWSRDVRMDELCHKHAITLTNLFHIVWAIVLGAYVGTDEVCFGYTALGRDVPVHRVETLVGPLVNVLATTVRHQEDETILNALLTHQAHLTNSLQHQHYALADVYASLGLVGSQLFNTIVSLQDTSHFDAPDEQRTRLEMLPANDVSEYDVALNIGVDKSTIQLVCSYQTVSLSAEQADALLRTAFHVLDEILRDPTQRFCELEVISPKCKEHLVKWNAGMLAPTHEYIHEKIQGQCRIHNSRQAVFDDLSSRLAARLIRMGVTSEDIIPIYSPKSRWMVIAILGVLKAGAAFTLLEISHPMARLRVICNQIKAPMLIAPASHAVPAANLAPILVVLDNITSLAEERPVSLPAVDIPPAREALAYLIFTSGSTGNPKGVMVTHQNLCSNASIITTSVNMTSDSRVLQFASHAFDGCLWEILGALLAGACLIIPSESENKEDLTGCIERMGVTWAFLTPSVARILKPETLPSLCNLVLGGEPIAASDLEMWRGHVQVVCAYGPTETTILASTTSPSTFPRDGKDIGTPTSSSLWIVDTRNYQTLVPLGATGELLIEGPNVSQGYLGDPEKTNDAFPDAPRWLSQLRKSPTRLYRTGDLVRFDTSTGTIRFVGRKDNQIKFHGQRIELGEIEYHAQFAFSSASTVIVDLITPEQPRQPYIVAFVHQLDAANETTDTNDTLLLPSSEVFRADALAAQNKMHKRLPHYMVPAVFLPLHRLPLSVTGKADRKRLRQCALALSSPELSAYRATASTKRMPSTAAERKMQELVATVLGRDPTEIGMDDSFFYLGGDSVQAMRLVAEGRQQGLTLSLRAIFDSPCLGDLSDQAKSLIEDNQRASTASRGNLRYDCDRIDKIVVTNSLNKADVVDVLPTTSFQRHWLDAQLKSYIVVDIPGPIDPARLLRAMHRVVEAHPILRVSFVPYETTTVQVILRTAVAITNVDLSTATVEELCRRDVDAQMAPGVPYLRVIIATQDKAGHKLIMRLSHAQYDAVSLSLLMNDLSHAYANDTHPLPSSHFPRFNDYITYQQAQRADLTATTFWRHLLQDVPLTHLNLQPAESSASNGTPITLSRDIDIAVFPSLPSDITIATMVKAAWSLALAQKTNSLAVIFGQVVHGRAIALPGVEGIVGPCANITPVVARLGLETTGLELMQALQDQHHSAMSYESVDLDDALAYANDSQAGRKGLQTIVQHQNNVMVDDMELSLGEVKCGVDFRAVDHLPKEVWVYSSVDEKRPGMLEVKIMSSTLVLGEEFAEELMGLLVEKIVGLLRHPESVCV</sequence>
<protein>
    <recommendedName>
        <fullName evidence="9">Malformin synthetase mlfA</fullName>
        <ecNumber evidence="8">6.3.2.-</ecNumber>
    </recommendedName>
    <alternativeName>
        <fullName evidence="9">Malformin biosynthesis cluster protein A</fullName>
    </alternativeName>
    <alternativeName>
        <fullName evidence="9">Nonribosomal peptide synthetase mlfA</fullName>
    </alternativeName>
</protein>
<name>MLFA_ASPLC</name>
<comment type="function">
    <text evidence="8 11">Nonribosomal peptide synthetase; part of the gene cluster that mediates the biosynthesis of malformins, cyclic pentapeptides with a disulfide bond between 2 consecutive cysteins, that show potential anti-tumor as well as antimalarial and antitrypanosomal properties (PubMed:30560908). The nonribosomal peptide synthetase mlfA is responsible of the formation of the cyclic pentapeptide (Probable). The malformin biosynthesis clusters in malformin-producing fungi also contain enzymes involved in the formation of the disulfide bond between the two consecutive cysteins within malformins, in addition to additional tailoring enzymes such as methyltransferases or oxidoreductases. They are also composed of up to 4 major facilitator superfamily transporters, and transcription factors probably involved in the regulation of the expression of those clusters (Probable).</text>
</comment>
<comment type="pathway">
    <text evidence="11">Secondary metabolite biosynthesis.</text>
</comment>
<comment type="domain">
    <text evidence="11">NRP synthetases are composed of discrete domains (adenylation (A), thiolation (T) or peptidyl carrier protein (PCP) and condensation (C) domains) which when grouped together are referred to as a single module. Each module is responsible for the recognition (via the A domain) and incorporation of a single amino acid into the growing peptide product. Thus, an NRP synthetase is generally composed of one or more modules and can terminate in a thioesterase domain (TE) that releases the newly synthesized peptide from the enzyme. Occasionally, epimerase (E) domains (responsible for L- to D- amino acid conversion) are present within the NRP synthetase. MlfA has the following architecture: A-T-C-A-T-C-A-T-C-C-A-T-C, with the functions of the five condensation domains during malformin biosynthesis being DL-joining (epimerizing subtype), LL-joining, epimerization, DL-joining and cyclizing domain, respectively.</text>
</comment>
<comment type="biotechnology">
    <text evidence="4 5 6 7">Malformins show anti-tumor properties against human colorectal and prostate cancer cells by the inhibition of proliferation and induction of apoptosis through the activation of the p38 signaling pathway (PubMed:26540166, PubMed:26645406, PubMed:28713983). Malformin C has also been shown to exhibit potent antimalarial and antitrypanosomal properties (PubMed:19876076).</text>
</comment>
<comment type="similarity">
    <text evidence="10">Belongs to the NRP synthetase family.</text>
</comment>
<gene>
    <name evidence="9" type="primary">mlfA</name>
    <name type="ORF">ASPFODRAFT_65064</name>
</gene>